<sequence length="208" mass="23163">MTGKKRSASSSRWLQEHFSDKYVLQAQKKGLRSRAWFKLDEIQQSDKLFKPGMTIVDLGAAPGGWSQYAVTQIGGQGRIIACDLLPMDPIVGVDFLQGDFRDELVLKALLERVGDSKVQVVMSDMAPNMCGTPAVDIPRSMYLVELALEMSRDVLAPGGSFVVKVFQGEGFEEYLKEIRSLFAKVKVRKPDSSRARSREVYIVATGRK</sequence>
<name>RLME_ENT38</name>
<dbReference type="EC" id="2.1.1.166" evidence="1"/>
<dbReference type="EMBL" id="CP000653">
    <property type="protein sequence ID" value="ABP62270.1"/>
    <property type="molecule type" value="Genomic_DNA"/>
</dbReference>
<dbReference type="RefSeq" id="WP_015960595.1">
    <property type="nucleotide sequence ID" value="NC_009436.1"/>
</dbReference>
<dbReference type="SMR" id="A4WEZ0"/>
<dbReference type="STRING" id="399742.Ent638_3613"/>
<dbReference type="GeneID" id="93306582"/>
<dbReference type="KEGG" id="ent:Ent638_3613"/>
<dbReference type="eggNOG" id="COG0293">
    <property type="taxonomic scope" value="Bacteria"/>
</dbReference>
<dbReference type="HOGENOM" id="CLU_009422_4_0_6"/>
<dbReference type="OrthoDB" id="9790080at2"/>
<dbReference type="Proteomes" id="UP000000230">
    <property type="component" value="Chromosome"/>
</dbReference>
<dbReference type="GO" id="GO:0005737">
    <property type="term" value="C:cytoplasm"/>
    <property type="evidence" value="ECO:0007669"/>
    <property type="project" value="UniProtKB-SubCell"/>
</dbReference>
<dbReference type="GO" id="GO:0008650">
    <property type="term" value="F:rRNA (uridine-2'-O-)-methyltransferase activity"/>
    <property type="evidence" value="ECO:0007669"/>
    <property type="project" value="UniProtKB-UniRule"/>
</dbReference>
<dbReference type="CDD" id="cd02440">
    <property type="entry name" value="AdoMet_MTases"/>
    <property type="match status" value="1"/>
</dbReference>
<dbReference type="FunFam" id="3.40.50.150:FF:000005">
    <property type="entry name" value="Ribosomal RNA large subunit methyltransferase E"/>
    <property type="match status" value="1"/>
</dbReference>
<dbReference type="Gene3D" id="3.40.50.150">
    <property type="entry name" value="Vaccinia Virus protein VP39"/>
    <property type="match status" value="1"/>
</dbReference>
<dbReference type="HAMAP" id="MF_01547">
    <property type="entry name" value="RNA_methyltr_E"/>
    <property type="match status" value="1"/>
</dbReference>
<dbReference type="InterPro" id="IPR050082">
    <property type="entry name" value="RNA_methyltr_RlmE"/>
</dbReference>
<dbReference type="InterPro" id="IPR002877">
    <property type="entry name" value="RNA_MeTrfase_FtsJ_dom"/>
</dbReference>
<dbReference type="InterPro" id="IPR015507">
    <property type="entry name" value="rRNA-MeTfrase_E"/>
</dbReference>
<dbReference type="InterPro" id="IPR004512">
    <property type="entry name" value="rRNA_MeTrfase_gammaproteobac"/>
</dbReference>
<dbReference type="InterPro" id="IPR029063">
    <property type="entry name" value="SAM-dependent_MTases_sf"/>
</dbReference>
<dbReference type="NCBIfam" id="NF008390">
    <property type="entry name" value="PRK11188.1"/>
    <property type="match status" value="1"/>
</dbReference>
<dbReference type="NCBIfam" id="TIGR00438">
    <property type="entry name" value="rrmJ"/>
    <property type="match status" value="1"/>
</dbReference>
<dbReference type="PANTHER" id="PTHR10920">
    <property type="entry name" value="RIBOSOMAL RNA METHYLTRANSFERASE"/>
    <property type="match status" value="1"/>
</dbReference>
<dbReference type="PANTHER" id="PTHR10920:SF18">
    <property type="entry name" value="RRNA METHYLTRANSFERASE 2, MITOCHONDRIAL"/>
    <property type="match status" value="1"/>
</dbReference>
<dbReference type="Pfam" id="PF01728">
    <property type="entry name" value="FtsJ"/>
    <property type="match status" value="1"/>
</dbReference>
<dbReference type="PIRSF" id="PIRSF005461">
    <property type="entry name" value="23S_rRNA_mtase"/>
    <property type="match status" value="1"/>
</dbReference>
<dbReference type="SUPFAM" id="SSF53335">
    <property type="entry name" value="S-adenosyl-L-methionine-dependent methyltransferases"/>
    <property type="match status" value="1"/>
</dbReference>
<reference key="1">
    <citation type="journal article" date="2010" name="PLoS Genet.">
        <title>Genome sequence of the plant growth promoting endophytic bacterium Enterobacter sp. 638.</title>
        <authorList>
            <person name="Taghavi S."/>
            <person name="van der Lelie D."/>
            <person name="Hoffman A."/>
            <person name="Zhang Y.B."/>
            <person name="Walla M.D."/>
            <person name="Vangronsveld J."/>
            <person name="Newman L."/>
            <person name="Monchy S."/>
        </authorList>
    </citation>
    <scope>NUCLEOTIDE SEQUENCE [LARGE SCALE GENOMIC DNA]</scope>
    <source>
        <strain>638</strain>
    </source>
</reference>
<protein>
    <recommendedName>
        <fullName evidence="1">Ribosomal RNA large subunit methyltransferase E</fullName>
        <ecNumber evidence="1">2.1.1.166</ecNumber>
    </recommendedName>
    <alternativeName>
        <fullName evidence="1">23S rRNA Um2552 methyltransferase</fullName>
    </alternativeName>
    <alternativeName>
        <fullName evidence="1">rRNA (uridine-2'-O-)-methyltransferase</fullName>
    </alternativeName>
</protein>
<accession>A4WEZ0</accession>
<proteinExistence type="inferred from homology"/>
<organism>
    <name type="scientific">Enterobacter sp. (strain 638)</name>
    <dbReference type="NCBI Taxonomy" id="399742"/>
    <lineage>
        <taxon>Bacteria</taxon>
        <taxon>Pseudomonadati</taxon>
        <taxon>Pseudomonadota</taxon>
        <taxon>Gammaproteobacteria</taxon>
        <taxon>Enterobacterales</taxon>
        <taxon>Enterobacteriaceae</taxon>
        <taxon>Enterobacter</taxon>
    </lineage>
</organism>
<evidence type="ECO:0000255" key="1">
    <source>
        <dbReference type="HAMAP-Rule" id="MF_01547"/>
    </source>
</evidence>
<gene>
    <name evidence="1" type="primary">rlmE</name>
    <name evidence="1" type="synonym">ftsJ</name>
    <name evidence="1" type="synonym">rrmJ</name>
    <name type="ordered locus">Ent638_3613</name>
</gene>
<feature type="chain" id="PRO_1000087685" description="Ribosomal RNA large subunit methyltransferase E">
    <location>
        <begin position="1"/>
        <end position="208"/>
    </location>
</feature>
<feature type="active site" description="Proton acceptor" evidence="1">
    <location>
        <position position="164"/>
    </location>
</feature>
<feature type="binding site" evidence="1">
    <location>
        <position position="63"/>
    </location>
    <ligand>
        <name>S-adenosyl-L-methionine</name>
        <dbReference type="ChEBI" id="CHEBI:59789"/>
    </ligand>
</feature>
<feature type="binding site" evidence="1">
    <location>
        <position position="65"/>
    </location>
    <ligand>
        <name>S-adenosyl-L-methionine</name>
        <dbReference type="ChEBI" id="CHEBI:59789"/>
    </ligand>
</feature>
<feature type="binding site" evidence="1">
    <location>
        <position position="83"/>
    </location>
    <ligand>
        <name>S-adenosyl-L-methionine</name>
        <dbReference type="ChEBI" id="CHEBI:59789"/>
    </ligand>
</feature>
<feature type="binding site" evidence="1">
    <location>
        <position position="99"/>
    </location>
    <ligand>
        <name>S-adenosyl-L-methionine</name>
        <dbReference type="ChEBI" id="CHEBI:59789"/>
    </ligand>
</feature>
<feature type="binding site" evidence="1">
    <location>
        <position position="124"/>
    </location>
    <ligand>
        <name>S-adenosyl-L-methionine</name>
        <dbReference type="ChEBI" id="CHEBI:59789"/>
    </ligand>
</feature>
<comment type="function">
    <text evidence="1">Specifically methylates the uridine in position 2552 of 23S rRNA at the 2'-O position of the ribose in the fully assembled 50S ribosomal subunit.</text>
</comment>
<comment type="catalytic activity">
    <reaction evidence="1">
        <text>uridine(2552) in 23S rRNA + S-adenosyl-L-methionine = 2'-O-methyluridine(2552) in 23S rRNA + S-adenosyl-L-homocysteine + H(+)</text>
        <dbReference type="Rhea" id="RHEA:42720"/>
        <dbReference type="Rhea" id="RHEA-COMP:10202"/>
        <dbReference type="Rhea" id="RHEA-COMP:10203"/>
        <dbReference type="ChEBI" id="CHEBI:15378"/>
        <dbReference type="ChEBI" id="CHEBI:57856"/>
        <dbReference type="ChEBI" id="CHEBI:59789"/>
        <dbReference type="ChEBI" id="CHEBI:65315"/>
        <dbReference type="ChEBI" id="CHEBI:74478"/>
        <dbReference type="EC" id="2.1.1.166"/>
    </reaction>
</comment>
<comment type="subcellular location">
    <subcellularLocation>
        <location evidence="1">Cytoplasm</location>
    </subcellularLocation>
</comment>
<comment type="similarity">
    <text evidence="1">Belongs to the class I-like SAM-binding methyltransferase superfamily. RNA methyltransferase RlmE family.</text>
</comment>
<keyword id="KW-0963">Cytoplasm</keyword>
<keyword id="KW-0489">Methyltransferase</keyword>
<keyword id="KW-0698">rRNA processing</keyword>
<keyword id="KW-0949">S-adenosyl-L-methionine</keyword>
<keyword id="KW-0808">Transferase</keyword>